<feature type="chain" id="PRO_0000411353" description="GTP cyclohydrolase 1">
    <location>
        <begin position="1"/>
        <end position="194"/>
    </location>
</feature>
<feature type="binding site" evidence="2">
    <location>
        <position position="83"/>
    </location>
    <ligand>
        <name>Zn(2+)</name>
        <dbReference type="ChEBI" id="CHEBI:29105"/>
    </ligand>
</feature>
<feature type="binding site" evidence="2">
    <location>
        <position position="86"/>
    </location>
    <ligand>
        <name>Zn(2+)</name>
        <dbReference type="ChEBI" id="CHEBI:29105"/>
    </ligand>
</feature>
<feature type="binding site" evidence="2">
    <location>
        <position position="155"/>
    </location>
    <ligand>
        <name>Zn(2+)</name>
        <dbReference type="ChEBI" id="CHEBI:29105"/>
    </ligand>
</feature>
<organism>
    <name type="scientific">Streptococcus pyogenes serotype M3 (strain SSI-1)</name>
    <dbReference type="NCBI Taxonomy" id="193567"/>
    <lineage>
        <taxon>Bacteria</taxon>
        <taxon>Bacillati</taxon>
        <taxon>Bacillota</taxon>
        <taxon>Bacilli</taxon>
        <taxon>Lactobacillales</taxon>
        <taxon>Streptococcaceae</taxon>
        <taxon>Streptococcus</taxon>
    </lineage>
</organism>
<accession>P0DB31</accession>
<accession>Q8K7K9</accession>
<protein>
    <recommendedName>
        <fullName evidence="2">GTP cyclohydrolase 1</fullName>
        <ecNumber evidence="2">3.5.4.16</ecNumber>
    </recommendedName>
    <alternativeName>
        <fullName evidence="2">GTP cyclohydrolase I</fullName>
        <shortName evidence="2">GTP-CH-I</shortName>
    </alternativeName>
</protein>
<proteinExistence type="inferred from homology"/>
<comment type="catalytic activity">
    <reaction evidence="2">
        <text>GTP + H2O = 7,8-dihydroneopterin 3'-triphosphate + formate + H(+)</text>
        <dbReference type="Rhea" id="RHEA:17473"/>
        <dbReference type="ChEBI" id="CHEBI:15377"/>
        <dbReference type="ChEBI" id="CHEBI:15378"/>
        <dbReference type="ChEBI" id="CHEBI:15740"/>
        <dbReference type="ChEBI" id="CHEBI:37565"/>
        <dbReference type="ChEBI" id="CHEBI:58462"/>
        <dbReference type="EC" id="3.5.4.16"/>
    </reaction>
</comment>
<comment type="pathway">
    <text evidence="2">Cofactor biosynthesis; 7,8-dihydroneopterin triphosphate biosynthesis; 7,8-dihydroneopterin triphosphate from GTP: step 1/1.</text>
</comment>
<comment type="subunit">
    <text evidence="1">Toroid-shaped homodecamer, composed of two pentamers of five dimers.</text>
</comment>
<comment type="similarity">
    <text evidence="2">Belongs to the GTP cyclohydrolase I family.</text>
</comment>
<comment type="sequence caution" evidence="3">
    <conflict type="erroneous initiation">
        <sequence resource="EMBL-CDS" id="BAC64054"/>
    </conflict>
</comment>
<sequence length="194" mass="21866">MKRERLMSINKEKAEAAIYQFLEAIGENPNREGLLDTPKRVAKMYAEMFLGLGKDPKEEFTAVFKEHHEDVVIVKDISFYSVCEHHLVPFYGKAHIAYLPSDGRVTGLSKLARAVEVASKRPQLQERLTSQIADALVEALNPKGTLVMVEAEHMCMTMRGIKKPGSKTITTTARGLYKESRAERQEVISLMTKD</sequence>
<gene>
    <name evidence="2" type="primary">folE</name>
    <name type="ordered locus">SPs0959</name>
</gene>
<name>GCH1_STRPQ</name>
<reference key="1">
    <citation type="journal article" date="2003" name="Genome Res.">
        <title>Genome sequence of an M3 strain of Streptococcus pyogenes reveals a large-scale genomic rearrangement in invasive strains and new insights into phage evolution.</title>
        <authorList>
            <person name="Nakagawa I."/>
            <person name="Kurokawa K."/>
            <person name="Yamashita A."/>
            <person name="Nakata M."/>
            <person name="Tomiyasu Y."/>
            <person name="Okahashi N."/>
            <person name="Kawabata S."/>
            <person name="Yamazaki K."/>
            <person name="Shiba T."/>
            <person name="Yasunaga T."/>
            <person name="Hayashi H."/>
            <person name="Hattori M."/>
            <person name="Hamada S."/>
        </authorList>
    </citation>
    <scope>NUCLEOTIDE SEQUENCE [LARGE SCALE GENOMIC DNA]</scope>
    <source>
        <strain>SSI-1</strain>
    </source>
</reference>
<keyword id="KW-0342">GTP-binding</keyword>
<keyword id="KW-0378">Hydrolase</keyword>
<keyword id="KW-0479">Metal-binding</keyword>
<keyword id="KW-0547">Nucleotide-binding</keyword>
<keyword id="KW-0554">One-carbon metabolism</keyword>
<keyword id="KW-0862">Zinc</keyword>
<dbReference type="EC" id="3.5.4.16" evidence="2"/>
<dbReference type="EMBL" id="BA000034">
    <property type="protein sequence ID" value="BAC64054.1"/>
    <property type="status" value="ALT_INIT"/>
    <property type="molecule type" value="Genomic_DNA"/>
</dbReference>
<dbReference type="SMR" id="P0DB31"/>
<dbReference type="KEGG" id="sps:SPs0959"/>
<dbReference type="HOGENOM" id="CLU_049768_3_3_9"/>
<dbReference type="UniPathway" id="UPA00848">
    <property type="reaction ID" value="UER00151"/>
</dbReference>
<dbReference type="GO" id="GO:0005737">
    <property type="term" value="C:cytoplasm"/>
    <property type="evidence" value="ECO:0007669"/>
    <property type="project" value="TreeGrafter"/>
</dbReference>
<dbReference type="GO" id="GO:0005525">
    <property type="term" value="F:GTP binding"/>
    <property type="evidence" value="ECO:0007669"/>
    <property type="project" value="UniProtKB-KW"/>
</dbReference>
<dbReference type="GO" id="GO:0003934">
    <property type="term" value="F:GTP cyclohydrolase I activity"/>
    <property type="evidence" value="ECO:0007669"/>
    <property type="project" value="UniProtKB-UniRule"/>
</dbReference>
<dbReference type="GO" id="GO:0008270">
    <property type="term" value="F:zinc ion binding"/>
    <property type="evidence" value="ECO:0007669"/>
    <property type="project" value="UniProtKB-UniRule"/>
</dbReference>
<dbReference type="GO" id="GO:0006730">
    <property type="term" value="P:one-carbon metabolic process"/>
    <property type="evidence" value="ECO:0007669"/>
    <property type="project" value="UniProtKB-UniRule"/>
</dbReference>
<dbReference type="GO" id="GO:0006729">
    <property type="term" value="P:tetrahydrobiopterin biosynthetic process"/>
    <property type="evidence" value="ECO:0007669"/>
    <property type="project" value="TreeGrafter"/>
</dbReference>
<dbReference type="GO" id="GO:0046654">
    <property type="term" value="P:tetrahydrofolate biosynthetic process"/>
    <property type="evidence" value="ECO:0007669"/>
    <property type="project" value="UniProtKB-UniRule"/>
</dbReference>
<dbReference type="FunFam" id="1.10.286.10:FF:000001">
    <property type="entry name" value="GTP cyclohydrolase 1"/>
    <property type="match status" value="1"/>
</dbReference>
<dbReference type="FunFam" id="3.30.1130.10:FF:000001">
    <property type="entry name" value="GTP cyclohydrolase 1"/>
    <property type="match status" value="1"/>
</dbReference>
<dbReference type="Gene3D" id="1.10.286.10">
    <property type="match status" value="1"/>
</dbReference>
<dbReference type="Gene3D" id="3.30.1130.10">
    <property type="match status" value="1"/>
</dbReference>
<dbReference type="HAMAP" id="MF_00223">
    <property type="entry name" value="FolE"/>
    <property type="match status" value="1"/>
</dbReference>
<dbReference type="InterPro" id="IPR043133">
    <property type="entry name" value="GTP-CH-I_C/QueF"/>
</dbReference>
<dbReference type="InterPro" id="IPR043134">
    <property type="entry name" value="GTP-CH-I_N"/>
</dbReference>
<dbReference type="InterPro" id="IPR001474">
    <property type="entry name" value="GTP_CycHdrlase_I"/>
</dbReference>
<dbReference type="InterPro" id="IPR018234">
    <property type="entry name" value="GTP_CycHdrlase_I_CS"/>
</dbReference>
<dbReference type="InterPro" id="IPR020602">
    <property type="entry name" value="GTP_CycHdrlase_I_dom"/>
</dbReference>
<dbReference type="NCBIfam" id="TIGR00063">
    <property type="entry name" value="folE"/>
    <property type="match status" value="1"/>
</dbReference>
<dbReference type="NCBIfam" id="NF006825">
    <property type="entry name" value="PRK09347.1-2"/>
    <property type="match status" value="1"/>
</dbReference>
<dbReference type="NCBIfam" id="NF006826">
    <property type="entry name" value="PRK09347.1-3"/>
    <property type="match status" value="1"/>
</dbReference>
<dbReference type="PANTHER" id="PTHR11109:SF7">
    <property type="entry name" value="GTP CYCLOHYDROLASE 1"/>
    <property type="match status" value="1"/>
</dbReference>
<dbReference type="PANTHER" id="PTHR11109">
    <property type="entry name" value="GTP CYCLOHYDROLASE I"/>
    <property type="match status" value="1"/>
</dbReference>
<dbReference type="Pfam" id="PF01227">
    <property type="entry name" value="GTP_cyclohydroI"/>
    <property type="match status" value="1"/>
</dbReference>
<dbReference type="SUPFAM" id="SSF55620">
    <property type="entry name" value="Tetrahydrobiopterin biosynthesis enzymes-like"/>
    <property type="match status" value="1"/>
</dbReference>
<dbReference type="PROSITE" id="PS00859">
    <property type="entry name" value="GTP_CYCLOHYDROL_1_1"/>
    <property type="match status" value="1"/>
</dbReference>
<dbReference type="PROSITE" id="PS00860">
    <property type="entry name" value="GTP_CYCLOHYDROL_1_2"/>
    <property type="match status" value="1"/>
</dbReference>
<evidence type="ECO:0000250" key="1"/>
<evidence type="ECO:0000255" key="2">
    <source>
        <dbReference type="HAMAP-Rule" id="MF_00223"/>
    </source>
</evidence>
<evidence type="ECO:0000305" key="3"/>